<dbReference type="EC" id="2.7.1.21" evidence="1"/>
<dbReference type="EMBL" id="AL596173">
    <property type="protein sequence ID" value="CAC97914.1"/>
    <property type="molecule type" value="Genomic_DNA"/>
</dbReference>
<dbReference type="PIR" id="AB1768">
    <property type="entry name" value="AB1768"/>
</dbReference>
<dbReference type="RefSeq" id="WP_003764010.1">
    <property type="nucleotide sequence ID" value="NC_003212.1"/>
</dbReference>
<dbReference type="SMR" id="Q927U9"/>
<dbReference type="STRING" id="272626.gene:17567068"/>
<dbReference type="KEGG" id="lin:lin2688"/>
<dbReference type="eggNOG" id="COG1435">
    <property type="taxonomic scope" value="Bacteria"/>
</dbReference>
<dbReference type="HOGENOM" id="CLU_064400_2_2_9"/>
<dbReference type="OrthoDB" id="9781579at2"/>
<dbReference type="Proteomes" id="UP000002513">
    <property type="component" value="Chromosome"/>
</dbReference>
<dbReference type="GO" id="GO:0005829">
    <property type="term" value="C:cytosol"/>
    <property type="evidence" value="ECO:0007669"/>
    <property type="project" value="TreeGrafter"/>
</dbReference>
<dbReference type="GO" id="GO:0005524">
    <property type="term" value="F:ATP binding"/>
    <property type="evidence" value="ECO:0007669"/>
    <property type="project" value="UniProtKB-UniRule"/>
</dbReference>
<dbReference type="GO" id="GO:0004797">
    <property type="term" value="F:thymidine kinase activity"/>
    <property type="evidence" value="ECO:0007669"/>
    <property type="project" value="UniProtKB-UniRule"/>
</dbReference>
<dbReference type="GO" id="GO:0008270">
    <property type="term" value="F:zinc ion binding"/>
    <property type="evidence" value="ECO:0007669"/>
    <property type="project" value="UniProtKB-UniRule"/>
</dbReference>
<dbReference type="GO" id="GO:0071897">
    <property type="term" value="P:DNA biosynthetic process"/>
    <property type="evidence" value="ECO:0007669"/>
    <property type="project" value="UniProtKB-KW"/>
</dbReference>
<dbReference type="GO" id="GO:0046104">
    <property type="term" value="P:thymidine metabolic process"/>
    <property type="evidence" value="ECO:0007669"/>
    <property type="project" value="TreeGrafter"/>
</dbReference>
<dbReference type="FunFam" id="3.30.60.20:FF:000062">
    <property type="entry name" value="Thymidine kinase"/>
    <property type="match status" value="1"/>
</dbReference>
<dbReference type="Gene3D" id="3.30.60.20">
    <property type="match status" value="1"/>
</dbReference>
<dbReference type="Gene3D" id="3.40.50.300">
    <property type="entry name" value="P-loop containing nucleotide triphosphate hydrolases"/>
    <property type="match status" value="1"/>
</dbReference>
<dbReference type="HAMAP" id="MF_00124">
    <property type="entry name" value="Thymidine_kinase"/>
    <property type="match status" value="1"/>
</dbReference>
<dbReference type="InterPro" id="IPR027417">
    <property type="entry name" value="P-loop_NTPase"/>
</dbReference>
<dbReference type="InterPro" id="IPR001267">
    <property type="entry name" value="Thymidine_kinase"/>
</dbReference>
<dbReference type="InterPro" id="IPR020633">
    <property type="entry name" value="Thymidine_kinase_CS"/>
</dbReference>
<dbReference type="NCBIfam" id="NF003299">
    <property type="entry name" value="PRK04296.1-4"/>
    <property type="match status" value="1"/>
</dbReference>
<dbReference type="NCBIfam" id="NF003300">
    <property type="entry name" value="PRK04296.1-5"/>
    <property type="match status" value="1"/>
</dbReference>
<dbReference type="PANTHER" id="PTHR11441">
    <property type="entry name" value="THYMIDINE KINASE"/>
    <property type="match status" value="1"/>
</dbReference>
<dbReference type="PANTHER" id="PTHR11441:SF0">
    <property type="entry name" value="THYMIDINE KINASE, CYTOSOLIC"/>
    <property type="match status" value="1"/>
</dbReference>
<dbReference type="Pfam" id="PF00265">
    <property type="entry name" value="TK"/>
    <property type="match status" value="1"/>
</dbReference>
<dbReference type="PIRSF" id="PIRSF035805">
    <property type="entry name" value="TK_cell"/>
    <property type="match status" value="1"/>
</dbReference>
<dbReference type="SUPFAM" id="SSF57716">
    <property type="entry name" value="Glucocorticoid receptor-like (DNA-binding domain)"/>
    <property type="match status" value="1"/>
</dbReference>
<dbReference type="SUPFAM" id="SSF52540">
    <property type="entry name" value="P-loop containing nucleoside triphosphate hydrolases"/>
    <property type="match status" value="1"/>
</dbReference>
<dbReference type="PROSITE" id="PS00603">
    <property type="entry name" value="TK_CELLULAR_TYPE"/>
    <property type="match status" value="1"/>
</dbReference>
<protein>
    <recommendedName>
        <fullName evidence="1">Thymidine kinase</fullName>
        <ecNumber evidence="1">2.7.1.21</ecNumber>
    </recommendedName>
</protein>
<name>KITH_LISIN</name>
<feature type="chain" id="PRO_0000174988" description="Thymidine kinase">
    <location>
        <begin position="1"/>
        <end position="191"/>
    </location>
</feature>
<feature type="active site" description="Proton acceptor" evidence="1">
    <location>
        <position position="86"/>
    </location>
</feature>
<feature type="binding site" evidence="1">
    <location>
        <begin position="9"/>
        <end position="16"/>
    </location>
    <ligand>
        <name>ATP</name>
        <dbReference type="ChEBI" id="CHEBI:30616"/>
    </ligand>
</feature>
<feature type="binding site" evidence="1">
    <location>
        <begin position="85"/>
        <end position="88"/>
    </location>
    <ligand>
        <name>ATP</name>
        <dbReference type="ChEBI" id="CHEBI:30616"/>
    </ligand>
</feature>
<feature type="binding site" evidence="1">
    <location>
        <position position="143"/>
    </location>
    <ligand>
        <name>Zn(2+)</name>
        <dbReference type="ChEBI" id="CHEBI:29105"/>
    </ligand>
</feature>
<feature type="binding site" evidence="1">
    <location>
        <position position="146"/>
    </location>
    <ligand>
        <name>Zn(2+)</name>
        <dbReference type="ChEBI" id="CHEBI:29105"/>
    </ligand>
</feature>
<feature type="binding site" evidence="1">
    <location>
        <position position="181"/>
    </location>
    <ligand>
        <name>Zn(2+)</name>
        <dbReference type="ChEBI" id="CHEBI:29105"/>
    </ligand>
</feature>
<feature type="binding site" evidence="1">
    <location>
        <position position="184"/>
    </location>
    <ligand>
        <name>Zn(2+)</name>
        <dbReference type="ChEBI" id="CHEBI:29105"/>
    </ligand>
</feature>
<gene>
    <name evidence="1" type="primary">tdk</name>
    <name type="ordered locus">lin2688</name>
</gene>
<comment type="catalytic activity">
    <reaction evidence="1">
        <text>thymidine + ATP = dTMP + ADP + H(+)</text>
        <dbReference type="Rhea" id="RHEA:19129"/>
        <dbReference type="ChEBI" id="CHEBI:15378"/>
        <dbReference type="ChEBI" id="CHEBI:17748"/>
        <dbReference type="ChEBI" id="CHEBI:30616"/>
        <dbReference type="ChEBI" id="CHEBI:63528"/>
        <dbReference type="ChEBI" id="CHEBI:456216"/>
        <dbReference type="EC" id="2.7.1.21"/>
    </reaction>
</comment>
<comment type="subunit">
    <text evidence="1">Homotetramer.</text>
</comment>
<comment type="subcellular location">
    <subcellularLocation>
        <location evidence="1">Cytoplasm</location>
    </subcellularLocation>
</comment>
<comment type="similarity">
    <text evidence="1">Belongs to the thymidine kinase family.</text>
</comment>
<evidence type="ECO:0000255" key="1">
    <source>
        <dbReference type="HAMAP-Rule" id="MF_00124"/>
    </source>
</evidence>
<proteinExistence type="inferred from homology"/>
<sequence>MAQLFFRYGSMNSGKTIEILKVAHNYEEQNKTVAIFTSGIDDRDQVGFISSRIGLKREATPIFSDTNIFEIVANIKPKPNCVLLDESQFLEKEHVFQLAKIVDDLNIPVIAYGLKNDFRNELFEGSKYLLLYADKLEEMKTICWFCAKKATMVLRVDDKGKPVYTGEQIMIGGNDHYYPVCRKCHANPPIK</sequence>
<reference key="1">
    <citation type="journal article" date="2001" name="Science">
        <title>Comparative genomics of Listeria species.</title>
        <authorList>
            <person name="Glaser P."/>
            <person name="Frangeul L."/>
            <person name="Buchrieser C."/>
            <person name="Rusniok C."/>
            <person name="Amend A."/>
            <person name="Baquero F."/>
            <person name="Berche P."/>
            <person name="Bloecker H."/>
            <person name="Brandt P."/>
            <person name="Chakraborty T."/>
            <person name="Charbit A."/>
            <person name="Chetouani F."/>
            <person name="Couve E."/>
            <person name="de Daruvar A."/>
            <person name="Dehoux P."/>
            <person name="Domann E."/>
            <person name="Dominguez-Bernal G."/>
            <person name="Duchaud E."/>
            <person name="Durant L."/>
            <person name="Dussurget O."/>
            <person name="Entian K.-D."/>
            <person name="Fsihi H."/>
            <person name="Garcia-del Portillo F."/>
            <person name="Garrido P."/>
            <person name="Gautier L."/>
            <person name="Goebel W."/>
            <person name="Gomez-Lopez N."/>
            <person name="Hain T."/>
            <person name="Hauf J."/>
            <person name="Jackson D."/>
            <person name="Jones L.-M."/>
            <person name="Kaerst U."/>
            <person name="Kreft J."/>
            <person name="Kuhn M."/>
            <person name="Kunst F."/>
            <person name="Kurapkat G."/>
            <person name="Madueno E."/>
            <person name="Maitournam A."/>
            <person name="Mata Vicente J."/>
            <person name="Ng E."/>
            <person name="Nedjari H."/>
            <person name="Nordsiek G."/>
            <person name="Novella S."/>
            <person name="de Pablos B."/>
            <person name="Perez-Diaz J.-C."/>
            <person name="Purcell R."/>
            <person name="Remmel B."/>
            <person name="Rose M."/>
            <person name="Schlueter T."/>
            <person name="Simoes N."/>
            <person name="Tierrez A."/>
            <person name="Vazquez-Boland J.-A."/>
            <person name="Voss H."/>
            <person name="Wehland J."/>
            <person name="Cossart P."/>
        </authorList>
    </citation>
    <scope>NUCLEOTIDE SEQUENCE [LARGE SCALE GENOMIC DNA]</scope>
    <source>
        <strain>ATCC BAA-680 / CLIP 11262</strain>
    </source>
</reference>
<organism>
    <name type="scientific">Listeria innocua serovar 6a (strain ATCC BAA-680 / CLIP 11262)</name>
    <dbReference type="NCBI Taxonomy" id="272626"/>
    <lineage>
        <taxon>Bacteria</taxon>
        <taxon>Bacillati</taxon>
        <taxon>Bacillota</taxon>
        <taxon>Bacilli</taxon>
        <taxon>Bacillales</taxon>
        <taxon>Listeriaceae</taxon>
        <taxon>Listeria</taxon>
    </lineage>
</organism>
<accession>Q927U9</accession>
<keyword id="KW-0067">ATP-binding</keyword>
<keyword id="KW-0963">Cytoplasm</keyword>
<keyword id="KW-0237">DNA synthesis</keyword>
<keyword id="KW-0418">Kinase</keyword>
<keyword id="KW-0479">Metal-binding</keyword>
<keyword id="KW-0547">Nucleotide-binding</keyword>
<keyword id="KW-0808">Transferase</keyword>
<keyword id="KW-0862">Zinc</keyword>